<sequence length="185" mass="21074">MAEAKALPRFKKLYQDNIRKALLEEFKYDNEMQIPRITKVVLNMGVGEATGDSKKPAVAAEDLAMIAGQKAVVTRARNSIATFKLREGMPIGAKVTLRQDRMYEFLDRLITIALPRVRDFRGLNPKSFDGRGNYAMGIKEHIVFPEINYDKVDQIWGMDIIVCTTAKTDDEARSLLRAFNFPFRQ</sequence>
<reference key="1">
    <citation type="submission" date="2007-10" db="EMBL/GenBank/DDBJ databases">
        <title>Brucella canis ATCC 23365 whole genome shotgun sequencing project.</title>
        <authorList>
            <person name="Setubal J.C."/>
            <person name="Bowns C."/>
            <person name="Boyle S."/>
            <person name="Crasta O.R."/>
            <person name="Czar M.J."/>
            <person name="Dharmanolla C."/>
            <person name="Gillespie J.J."/>
            <person name="Kenyon R.W."/>
            <person name="Lu J."/>
            <person name="Mane S."/>
            <person name="Mohapatra S."/>
            <person name="Nagrani S."/>
            <person name="Purkayastha A."/>
            <person name="Rajasimha H.K."/>
            <person name="Shallom J.M."/>
            <person name="Shallom S."/>
            <person name="Shukla M."/>
            <person name="Snyder E.E."/>
            <person name="Sobral B.W."/>
            <person name="Wattam A.R."/>
            <person name="Will R."/>
            <person name="Williams K."/>
            <person name="Yoo H."/>
            <person name="Bruce D."/>
            <person name="Detter C."/>
            <person name="Munk C."/>
            <person name="Brettin T.S."/>
        </authorList>
    </citation>
    <scope>NUCLEOTIDE SEQUENCE [LARGE SCALE GENOMIC DNA]</scope>
    <source>
        <strain>ATCC 23365 / NCTC 10854 / RM-666</strain>
    </source>
</reference>
<protein>
    <recommendedName>
        <fullName evidence="1">Large ribosomal subunit protein uL5</fullName>
    </recommendedName>
    <alternativeName>
        <fullName evidence="2">50S ribosomal protein L5</fullName>
    </alternativeName>
</protein>
<dbReference type="EMBL" id="CP000872">
    <property type="protein sequence ID" value="ABX62293.1"/>
    <property type="molecule type" value="Genomic_DNA"/>
</dbReference>
<dbReference type="RefSeq" id="WP_002964350.1">
    <property type="nucleotide sequence ID" value="NC_010103.1"/>
</dbReference>
<dbReference type="SMR" id="A9M5N8"/>
<dbReference type="GeneID" id="97533536"/>
<dbReference type="KEGG" id="bcs:BCAN_A1244"/>
<dbReference type="HOGENOM" id="CLU_061015_2_1_5"/>
<dbReference type="PhylomeDB" id="A9M5N8"/>
<dbReference type="Proteomes" id="UP000001385">
    <property type="component" value="Chromosome I"/>
</dbReference>
<dbReference type="GO" id="GO:1990904">
    <property type="term" value="C:ribonucleoprotein complex"/>
    <property type="evidence" value="ECO:0007669"/>
    <property type="project" value="UniProtKB-KW"/>
</dbReference>
<dbReference type="GO" id="GO:0005840">
    <property type="term" value="C:ribosome"/>
    <property type="evidence" value="ECO:0007669"/>
    <property type="project" value="UniProtKB-KW"/>
</dbReference>
<dbReference type="GO" id="GO:0019843">
    <property type="term" value="F:rRNA binding"/>
    <property type="evidence" value="ECO:0007669"/>
    <property type="project" value="UniProtKB-UniRule"/>
</dbReference>
<dbReference type="GO" id="GO:0003735">
    <property type="term" value="F:structural constituent of ribosome"/>
    <property type="evidence" value="ECO:0007669"/>
    <property type="project" value="InterPro"/>
</dbReference>
<dbReference type="GO" id="GO:0000049">
    <property type="term" value="F:tRNA binding"/>
    <property type="evidence" value="ECO:0007669"/>
    <property type="project" value="UniProtKB-UniRule"/>
</dbReference>
<dbReference type="GO" id="GO:0006412">
    <property type="term" value="P:translation"/>
    <property type="evidence" value="ECO:0007669"/>
    <property type="project" value="UniProtKB-UniRule"/>
</dbReference>
<dbReference type="FunFam" id="3.30.1440.10:FF:000001">
    <property type="entry name" value="50S ribosomal protein L5"/>
    <property type="match status" value="1"/>
</dbReference>
<dbReference type="Gene3D" id="3.30.1440.10">
    <property type="match status" value="1"/>
</dbReference>
<dbReference type="HAMAP" id="MF_01333_B">
    <property type="entry name" value="Ribosomal_uL5_B"/>
    <property type="match status" value="1"/>
</dbReference>
<dbReference type="InterPro" id="IPR002132">
    <property type="entry name" value="Ribosomal_uL5"/>
</dbReference>
<dbReference type="InterPro" id="IPR020930">
    <property type="entry name" value="Ribosomal_uL5_bac-type"/>
</dbReference>
<dbReference type="InterPro" id="IPR031309">
    <property type="entry name" value="Ribosomal_uL5_C"/>
</dbReference>
<dbReference type="InterPro" id="IPR020929">
    <property type="entry name" value="Ribosomal_uL5_CS"/>
</dbReference>
<dbReference type="InterPro" id="IPR022803">
    <property type="entry name" value="Ribosomal_uL5_dom_sf"/>
</dbReference>
<dbReference type="InterPro" id="IPR031310">
    <property type="entry name" value="Ribosomal_uL5_N"/>
</dbReference>
<dbReference type="NCBIfam" id="NF000585">
    <property type="entry name" value="PRK00010.1"/>
    <property type="match status" value="1"/>
</dbReference>
<dbReference type="PANTHER" id="PTHR11994">
    <property type="entry name" value="60S RIBOSOMAL PROTEIN L11-RELATED"/>
    <property type="match status" value="1"/>
</dbReference>
<dbReference type="Pfam" id="PF00281">
    <property type="entry name" value="Ribosomal_L5"/>
    <property type="match status" value="1"/>
</dbReference>
<dbReference type="Pfam" id="PF00673">
    <property type="entry name" value="Ribosomal_L5_C"/>
    <property type="match status" value="1"/>
</dbReference>
<dbReference type="PIRSF" id="PIRSF002161">
    <property type="entry name" value="Ribosomal_L5"/>
    <property type="match status" value="1"/>
</dbReference>
<dbReference type="SUPFAM" id="SSF55282">
    <property type="entry name" value="RL5-like"/>
    <property type="match status" value="1"/>
</dbReference>
<dbReference type="PROSITE" id="PS00358">
    <property type="entry name" value="RIBOSOMAL_L5"/>
    <property type="match status" value="1"/>
</dbReference>
<accession>A9M5N8</accession>
<keyword id="KW-1185">Reference proteome</keyword>
<keyword id="KW-0687">Ribonucleoprotein</keyword>
<keyword id="KW-0689">Ribosomal protein</keyword>
<keyword id="KW-0694">RNA-binding</keyword>
<keyword id="KW-0699">rRNA-binding</keyword>
<keyword id="KW-0820">tRNA-binding</keyword>
<gene>
    <name evidence="1" type="primary">rplE</name>
    <name type="ordered locus">BCAN_A1244</name>
</gene>
<proteinExistence type="inferred from homology"/>
<organism>
    <name type="scientific">Brucella canis (strain ATCC 23365 / NCTC 10854 / RM-666)</name>
    <dbReference type="NCBI Taxonomy" id="483179"/>
    <lineage>
        <taxon>Bacteria</taxon>
        <taxon>Pseudomonadati</taxon>
        <taxon>Pseudomonadota</taxon>
        <taxon>Alphaproteobacteria</taxon>
        <taxon>Hyphomicrobiales</taxon>
        <taxon>Brucellaceae</taxon>
        <taxon>Brucella/Ochrobactrum group</taxon>
        <taxon>Brucella</taxon>
    </lineage>
</organism>
<evidence type="ECO:0000255" key="1">
    <source>
        <dbReference type="HAMAP-Rule" id="MF_01333"/>
    </source>
</evidence>
<evidence type="ECO:0000305" key="2"/>
<comment type="function">
    <text evidence="1">This is one of the proteins that bind and probably mediate the attachment of the 5S RNA into the large ribosomal subunit, where it forms part of the central protuberance. In the 70S ribosome it contacts protein S13 of the 30S subunit (bridge B1b), connecting the 2 subunits; this bridge is implicated in subunit movement. Contacts the P site tRNA; the 5S rRNA and some of its associated proteins might help stabilize positioning of ribosome-bound tRNAs.</text>
</comment>
<comment type="subunit">
    <text evidence="1">Part of the 50S ribosomal subunit; part of the 5S rRNA/L5/L18/L25 subcomplex. Contacts the 5S rRNA and the P site tRNA. Forms a bridge to the 30S subunit in the 70S ribosome.</text>
</comment>
<comment type="similarity">
    <text evidence="1">Belongs to the universal ribosomal protein uL5 family.</text>
</comment>
<name>RL5_BRUC2</name>
<feature type="chain" id="PRO_1000086581" description="Large ribosomal subunit protein uL5">
    <location>
        <begin position="1"/>
        <end position="185"/>
    </location>
</feature>